<reference evidence="2" key="1">
    <citation type="journal article" date="2003" name="Peptides">
        <title>Cloning of the (Thr6)-phyllokinin precursor from Phyllomedusa sauvagei skin confirms a non-consensus tyrosine 0-sulfation motif.</title>
        <authorList>
            <person name="Chen T."/>
            <person name="Shaw C."/>
        </authorList>
    </citation>
    <scope>PROTEIN SEQUENCE</scope>
    <scope>SULFATION AT TYR-11</scope>
    <scope>MASS SPECTROMETRY</scope>
    <source>
        <tissue evidence="1">Skin</tissue>
    </source>
</reference>
<accession>P84697</accession>
<accession>P84695</accession>
<accession>P84696</accession>
<dbReference type="GO" id="GO:0005576">
    <property type="term" value="C:extracellular region"/>
    <property type="evidence" value="ECO:0007669"/>
    <property type="project" value="UniProtKB-SubCell"/>
</dbReference>
<dbReference type="GO" id="GO:0090729">
    <property type="term" value="F:toxin activity"/>
    <property type="evidence" value="ECO:0007669"/>
    <property type="project" value="UniProtKB-KW"/>
</dbReference>
<dbReference type="GO" id="GO:0006952">
    <property type="term" value="P:defense response"/>
    <property type="evidence" value="ECO:0007669"/>
    <property type="project" value="UniProtKB-KW"/>
</dbReference>
<dbReference type="GO" id="GO:0042311">
    <property type="term" value="P:vasodilation"/>
    <property type="evidence" value="ECO:0007669"/>
    <property type="project" value="UniProtKB-KW"/>
</dbReference>
<protein>
    <recommendedName>
        <fullName>Phyllokinin</fullName>
    </recommendedName>
    <component>
        <recommendedName>
            <fullName>Bradykinin</fullName>
        </recommendedName>
    </component>
</protein>
<keyword id="KW-0878">Amphibian defense peptide</keyword>
<keyword id="KW-0903">Direct protein sequencing</keyword>
<keyword id="KW-1213">G-protein coupled receptor impairing toxin</keyword>
<keyword id="KW-0964">Secreted</keyword>
<keyword id="KW-0765">Sulfation</keyword>
<keyword id="KW-0800">Toxin</keyword>
<keyword id="KW-0838">Vasoactive</keyword>
<keyword id="KW-0840">Vasodilator</keyword>
<sequence length="11" mass="1337">RPPGFSPFRIY</sequence>
<proteinExistence type="evidence at protein level"/>
<feature type="peptide" id="PRO_0000043219" description="Phyllokinin">
    <location>
        <begin position="1"/>
        <end position="11"/>
    </location>
</feature>
<feature type="peptide" id="PRO_0000043220" description="Bradykinin">
    <location>
        <begin position="1"/>
        <end position="9"/>
    </location>
</feature>
<feature type="modified residue" description="Sulfotyrosine; partial" evidence="1">
    <location>
        <position position="11"/>
    </location>
</feature>
<comment type="function">
    <text>May produce in vitro relaxation of rat arterial smooth muscle and constriction of intestinal smooth muscle. May target bradykinin receptors (BDKRB).</text>
</comment>
<comment type="subcellular location">
    <subcellularLocation>
        <location evidence="2">Secreted</location>
    </subcellularLocation>
</comment>
<comment type="tissue specificity">
    <text evidence="2">Expressed by the skin glands.</text>
</comment>
<comment type="mass spectrometry" mass="1417.26" method="MALDI" evidence="1">
    <molecule>Phyllokinin</molecule>
    <text>Sulfated.</text>
</comment>
<comment type="mass spectrometry" mass="1334.89" method="MALDI" evidence="1">
    <molecule>Phyllokinin</molecule>
</comment>
<comment type="similarity">
    <text evidence="2">Belongs to the bradykinin-related peptide family.</text>
</comment>
<name>BRK2_PHYSA</name>
<evidence type="ECO:0000269" key="1">
    <source>
    </source>
</evidence>
<evidence type="ECO:0000305" key="2"/>
<organism>
    <name type="scientific">Phyllomedusa sauvagei</name>
    <name type="common">Sauvage's leaf frog</name>
    <dbReference type="NCBI Taxonomy" id="8395"/>
    <lineage>
        <taxon>Eukaryota</taxon>
        <taxon>Metazoa</taxon>
        <taxon>Chordata</taxon>
        <taxon>Craniata</taxon>
        <taxon>Vertebrata</taxon>
        <taxon>Euteleostomi</taxon>
        <taxon>Amphibia</taxon>
        <taxon>Batrachia</taxon>
        <taxon>Anura</taxon>
        <taxon>Neobatrachia</taxon>
        <taxon>Hyloidea</taxon>
        <taxon>Hylidae</taxon>
        <taxon>Phyllomedusinae</taxon>
        <taxon>Phyllomedusa</taxon>
    </lineage>
</organism>